<name>CSLA9_ARATH</name>
<sequence length="533" mass="60919">MELGDTTSVIPDSFMGYRDDITMQMSMVLDQIRAPLIVPALRLGVYICLTMSVMLFVERVYMGIVISLVKLFGRKPDKRFKYEPIKDDIELGNSAYPMVLIQIPMFNEREVYQLSIGAACGLSWPSDRIVIQVLDDSTDPTIKDLVEMECSRWASKGVNIKYEIRDNRNGYKAGALKEGMKKSYVKSCDYVAIFDADFQPEADFLWRTVPYLLHNPKLALVQARWKFVNSDECLMTRMQEMSLDYHFTVEQEVGSSTYAFFGFNGTAGIWRISALNEAGGWKDRTTVEDMDLAVRASLKGWKFLYLGSLKVKNELPSTFKAYRYQQHRWSCGPANLFRKMAFEIMTNKNVTLWKKVHVIYSFFVVRKLVAHIVTFIFYCVILPATVLVPEVTVPKWGAVYIPSVITLLNAVGTPRSLHLMVFWILFENVMSLHRTKATFIGLLEGGRVNEWIVTEKLGDVKAKSATKTSKKVIRFRFGDRIHVLELGVGMYLLFVGCYDAFFGKNHYYLYLFAQAIAFFIAGFGQIGTIVPNH</sequence>
<proteinExistence type="evidence at protein level"/>
<feature type="chain" id="PRO_0000319330" description="Glucomannan 4-beta-mannosyltransferase 9">
    <location>
        <begin position="1"/>
        <end position="533"/>
    </location>
</feature>
<feature type="transmembrane region" description="Helical" evidence="1">
    <location>
        <begin position="37"/>
        <end position="57"/>
    </location>
</feature>
<feature type="transmembrane region" description="Helical" evidence="1">
    <location>
        <begin position="368"/>
        <end position="388"/>
    </location>
</feature>
<feature type="transmembrane region" description="Helical" evidence="1">
    <location>
        <begin position="404"/>
        <end position="426"/>
    </location>
</feature>
<feature type="transmembrane region" description="Helical" evidence="1">
    <location>
        <begin position="483"/>
        <end position="503"/>
    </location>
</feature>
<feature type="transmembrane region" description="Helical" evidence="1">
    <location>
        <begin position="510"/>
        <end position="530"/>
    </location>
</feature>
<feature type="active site" evidence="1">
    <location>
        <position position="136"/>
    </location>
</feature>
<feature type="active site" evidence="1">
    <location>
        <position position="289"/>
    </location>
</feature>
<feature type="binding site" evidence="1">
    <location>
        <position position="195"/>
    </location>
    <ligand>
        <name>substrate</name>
    </ligand>
</feature>
<feature type="binding site" evidence="1">
    <location>
        <position position="197"/>
    </location>
    <ligand>
        <name>substrate</name>
    </ligand>
</feature>
<feature type="sequence conflict" description="In Ref. 5; BAE98718." evidence="6" ref="5">
    <original>V</original>
    <variation>F</variation>
    <location>
        <position position="399"/>
    </location>
</feature>
<protein>
    <recommendedName>
        <fullName evidence="6">Glucomannan 4-beta-mannosyltransferase 9</fullName>
        <ecNumber evidence="3 4">2.4.1.32</ecNumber>
    </recommendedName>
    <alternativeName>
        <fullName evidence="5">Cellulose synthase-like protein A9</fullName>
        <shortName evidence="5">AtCslA9</shortName>
    </alternativeName>
    <alternativeName>
        <fullName evidence="6">Glucomannan synthase</fullName>
    </alternativeName>
    <alternativeName>
        <fullName evidence="6">Mannan synthase 9</fullName>
    </alternativeName>
    <alternativeName>
        <fullName evidence="5">Protein RESISTANT TO AGROBACTERIUM TRANSFORMATION 4</fullName>
    </alternativeName>
</protein>
<keyword id="KW-0961">Cell wall biogenesis/degradation</keyword>
<keyword id="KW-0328">Glycosyltransferase</keyword>
<keyword id="KW-0333">Golgi apparatus</keyword>
<keyword id="KW-0472">Membrane</keyword>
<keyword id="KW-1185">Reference proteome</keyword>
<keyword id="KW-0808">Transferase</keyword>
<keyword id="KW-0812">Transmembrane</keyword>
<keyword id="KW-1133">Transmembrane helix</keyword>
<accession>Q9LZR3</accession>
<accession>Q0WVY0</accession>
<gene>
    <name evidence="5" type="primary">CSLA9</name>
    <name evidence="5" type="synonym">RAT4</name>
    <name type="ordered locus">At5g03760</name>
    <name type="ORF">F17C15.180</name>
</gene>
<evidence type="ECO:0000255" key="1"/>
<evidence type="ECO:0000269" key="2">
    <source>
    </source>
</evidence>
<evidence type="ECO:0000269" key="3">
    <source>
    </source>
</evidence>
<evidence type="ECO:0000269" key="4">
    <source>
    </source>
</evidence>
<evidence type="ECO:0000303" key="5">
    <source>
    </source>
</evidence>
<evidence type="ECO:0000305" key="6"/>
<dbReference type="EC" id="2.4.1.32" evidence="3 4"/>
<dbReference type="EMBL" id="AB005235">
    <property type="protein sequence ID" value="BAB08601.1"/>
    <property type="molecule type" value="Genomic_DNA"/>
</dbReference>
<dbReference type="EMBL" id="AL162506">
    <property type="protein sequence ID" value="CAB82941.1"/>
    <property type="molecule type" value="Genomic_DNA"/>
</dbReference>
<dbReference type="EMBL" id="CP002688">
    <property type="protein sequence ID" value="AED90651.1"/>
    <property type="molecule type" value="Genomic_DNA"/>
</dbReference>
<dbReference type="EMBL" id="AY060563">
    <property type="protein sequence ID" value="AAL31192.1"/>
    <property type="molecule type" value="mRNA"/>
</dbReference>
<dbReference type="EMBL" id="AY149935">
    <property type="protein sequence ID" value="AAN31089.1"/>
    <property type="molecule type" value="mRNA"/>
</dbReference>
<dbReference type="EMBL" id="AK226605">
    <property type="protein sequence ID" value="BAE98718.1"/>
    <property type="molecule type" value="mRNA"/>
</dbReference>
<dbReference type="PIR" id="T48403">
    <property type="entry name" value="T48403"/>
</dbReference>
<dbReference type="SMR" id="Q9LZR3"/>
<dbReference type="BioGRID" id="17010">
    <property type="interactions" value="1"/>
</dbReference>
<dbReference type="FunCoup" id="Q9LZR3">
    <property type="interactions" value="23"/>
</dbReference>
<dbReference type="IntAct" id="Q9LZR3">
    <property type="interactions" value="1"/>
</dbReference>
<dbReference type="STRING" id="3702.Q9LZR3"/>
<dbReference type="CAZy" id="GT2">
    <property type="family name" value="Glycosyltransferase Family 2"/>
</dbReference>
<dbReference type="PaxDb" id="3702-AT5G03760.1"/>
<dbReference type="ProteomicsDB" id="220499"/>
<dbReference type="EnsemblPlants" id="AT5G03760.1">
    <property type="protein sequence ID" value="AT5G03760.1"/>
    <property type="gene ID" value="AT5G03760"/>
</dbReference>
<dbReference type="GeneID" id="831734"/>
<dbReference type="Gramene" id="AT5G03760.1">
    <property type="protein sequence ID" value="AT5G03760.1"/>
    <property type="gene ID" value="AT5G03760"/>
</dbReference>
<dbReference type="KEGG" id="ath:AT5G03760"/>
<dbReference type="Araport" id="AT5G03760"/>
<dbReference type="TAIR" id="AT5G03760">
    <property type="gene designation" value="ATCSLA09"/>
</dbReference>
<dbReference type="eggNOG" id="ENOG502QR7J">
    <property type="taxonomic scope" value="Eukaryota"/>
</dbReference>
<dbReference type="HOGENOM" id="CLU_012856_2_0_1"/>
<dbReference type="InParanoid" id="Q9LZR3"/>
<dbReference type="OMA" id="IIFFMEV"/>
<dbReference type="PhylomeDB" id="Q9LZR3"/>
<dbReference type="BioCyc" id="ARA:AT5G03760-MONOMER"/>
<dbReference type="PRO" id="PR:Q9LZR3"/>
<dbReference type="Proteomes" id="UP000006548">
    <property type="component" value="Chromosome 5"/>
</dbReference>
<dbReference type="ExpressionAtlas" id="Q9LZR3">
    <property type="expression patterns" value="baseline and differential"/>
</dbReference>
<dbReference type="GO" id="GO:0000139">
    <property type="term" value="C:Golgi membrane"/>
    <property type="evidence" value="ECO:0007669"/>
    <property type="project" value="UniProtKB-SubCell"/>
</dbReference>
<dbReference type="GO" id="GO:0047259">
    <property type="term" value="F:glucomannan 4-beta-mannosyltransferase activity"/>
    <property type="evidence" value="ECO:0007669"/>
    <property type="project" value="UniProtKB-EC"/>
</dbReference>
<dbReference type="GO" id="GO:0051753">
    <property type="term" value="F:mannan synthase activity"/>
    <property type="evidence" value="ECO:0000314"/>
    <property type="project" value="TAIR"/>
</dbReference>
<dbReference type="GO" id="GO:0071555">
    <property type="term" value="P:cell wall organization"/>
    <property type="evidence" value="ECO:0007669"/>
    <property type="project" value="UniProtKB-KW"/>
</dbReference>
<dbReference type="GO" id="GO:0009294">
    <property type="term" value="P:DNA-mediated transformation"/>
    <property type="evidence" value="ECO:0000315"/>
    <property type="project" value="TAIR"/>
</dbReference>
<dbReference type="GO" id="GO:0009617">
    <property type="term" value="P:response to bacterium"/>
    <property type="evidence" value="ECO:0000315"/>
    <property type="project" value="TAIR"/>
</dbReference>
<dbReference type="CDD" id="cd06437">
    <property type="entry name" value="CESA_CaSu_A2"/>
    <property type="match status" value="1"/>
</dbReference>
<dbReference type="FunFam" id="3.90.550.10:FF:000015">
    <property type="entry name" value="Glucomannan 4-beta-mannosyltransferase 9"/>
    <property type="match status" value="1"/>
</dbReference>
<dbReference type="Gene3D" id="3.90.550.10">
    <property type="entry name" value="Spore Coat Polysaccharide Biosynthesis Protein SpsA, Chain A"/>
    <property type="match status" value="1"/>
</dbReference>
<dbReference type="InterPro" id="IPR001173">
    <property type="entry name" value="Glyco_trans_2-like"/>
</dbReference>
<dbReference type="InterPro" id="IPR029044">
    <property type="entry name" value="Nucleotide-diphossugar_trans"/>
</dbReference>
<dbReference type="PANTHER" id="PTHR32044">
    <property type="entry name" value="GLUCOMANNAN 4-BETA-MANNOSYLTRANSFERASE 9"/>
    <property type="match status" value="1"/>
</dbReference>
<dbReference type="PANTHER" id="PTHR32044:SF77">
    <property type="entry name" value="GLUCOMANNAN 4-BETA-MANNOSYLTRANSFERASE 9"/>
    <property type="match status" value="1"/>
</dbReference>
<dbReference type="Pfam" id="PF13632">
    <property type="entry name" value="Glyco_trans_2_3"/>
    <property type="match status" value="1"/>
</dbReference>
<dbReference type="SUPFAM" id="SSF53448">
    <property type="entry name" value="Nucleotide-diphospho-sugar transferases"/>
    <property type="match status" value="1"/>
</dbReference>
<reference key="1">
    <citation type="journal article" date="1997" name="DNA Res.">
        <title>Structural analysis of Arabidopsis thaliana chromosome 5. I. Sequence features of the 1.6 Mb regions covered by twenty physically assigned P1 clones.</title>
        <authorList>
            <person name="Sato S."/>
            <person name="Kotani H."/>
            <person name="Nakamura Y."/>
            <person name="Kaneko T."/>
            <person name="Asamizu E."/>
            <person name="Fukami M."/>
            <person name="Miyajima N."/>
            <person name="Tabata S."/>
        </authorList>
    </citation>
    <scope>NUCLEOTIDE SEQUENCE [LARGE SCALE GENOMIC DNA]</scope>
    <source>
        <strain>cv. Columbia</strain>
    </source>
</reference>
<reference key="2">
    <citation type="journal article" date="2000" name="Nature">
        <title>Sequence and analysis of chromosome 5 of the plant Arabidopsis thaliana.</title>
        <authorList>
            <person name="Tabata S."/>
            <person name="Kaneko T."/>
            <person name="Nakamura Y."/>
            <person name="Kotani H."/>
            <person name="Kato T."/>
            <person name="Asamizu E."/>
            <person name="Miyajima N."/>
            <person name="Sasamoto S."/>
            <person name="Kimura T."/>
            <person name="Hosouchi T."/>
            <person name="Kawashima K."/>
            <person name="Kohara M."/>
            <person name="Matsumoto M."/>
            <person name="Matsuno A."/>
            <person name="Muraki A."/>
            <person name="Nakayama S."/>
            <person name="Nakazaki N."/>
            <person name="Naruo K."/>
            <person name="Okumura S."/>
            <person name="Shinpo S."/>
            <person name="Takeuchi C."/>
            <person name="Wada T."/>
            <person name="Watanabe A."/>
            <person name="Yamada M."/>
            <person name="Yasuda M."/>
            <person name="Sato S."/>
            <person name="de la Bastide M."/>
            <person name="Huang E."/>
            <person name="Spiegel L."/>
            <person name="Gnoj L."/>
            <person name="O'Shaughnessy A."/>
            <person name="Preston R."/>
            <person name="Habermann K."/>
            <person name="Murray J."/>
            <person name="Johnson D."/>
            <person name="Rohlfing T."/>
            <person name="Nelson J."/>
            <person name="Stoneking T."/>
            <person name="Pepin K."/>
            <person name="Spieth J."/>
            <person name="Sekhon M."/>
            <person name="Armstrong J."/>
            <person name="Becker M."/>
            <person name="Belter E."/>
            <person name="Cordum H."/>
            <person name="Cordes M."/>
            <person name="Courtney L."/>
            <person name="Courtney W."/>
            <person name="Dante M."/>
            <person name="Du H."/>
            <person name="Edwards J."/>
            <person name="Fryman J."/>
            <person name="Haakensen B."/>
            <person name="Lamar E."/>
            <person name="Latreille P."/>
            <person name="Leonard S."/>
            <person name="Meyer R."/>
            <person name="Mulvaney E."/>
            <person name="Ozersky P."/>
            <person name="Riley A."/>
            <person name="Strowmatt C."/>
            <person name="Wagner-McPherson C."/>
            <person name="Wollam A."/>
            <person name="Yoakum M."/>
            <person name="Bell M."/>
            <person name="Dedhia N."/>
            <person name="Parnell L."/>
            <person name="Shah R."/>
            <person name="Rodriguez M."/>
            <person name="Hoon See L."/>
            <person name="Vil D."/>
            <person name="Baker J."/>
            <person name="Kirchoff K."/>
            <person name="Toth K."/>
            <person name="King L."/>
            <person name="Bahret A."/>
            <person name="Miller B."/>
            <person name="Marra M.A."/>
            <person name="Martienssen R."/>
            <person name="McCombie W.R."/>
            <person name="Wilson R.K."/>
            <person name="Murphy G."/>
            <person name="Bancroft I."/>
            <person name="Volckaert G."/>
            <person name="Wambutt R."/>
            <person name="Duesterhoeft A."/>
            <person name="Stiekema W."/>
            <person name="Pohl T."/>
            <person name="Entian K.-D."/>
            <person name="Terryn N."/>
            <person name="Hartley N."/>
            <person name="Bent E."/>
            <person name="Johnson S."/>
            <person name="Langham S.-A."/>
            <person name="McCullagh B."/>
            <person name="Robben J."/>
            <person name="Grymonprez B."/>
            <person name="Zimmermann W."/>
            <person name="Ramsperger U."/>
            <person name="Wedler H."/>
            <person name="Balke K."/>
            <person name="Wedler E."/>
            <person name="Peters S."/>
            <person name="van Staveren M."/>
            <person name="Dirkse W."/>
            <person name="Mooijman P."/>
            <person name="Klein Lankhorst R."/>
            <person name="Weitzenegger T."/>
            <person name="Bothe G."/>
            <person name="Rose M."/>
            <person name="Hauf J."/>
            <person name="Berneiser S."/>
            <person name="Hempel S."/>
            <person name="Feldpausch M."/>
            <person name="Lamberth S."/>
            <person name="Villarroel R."/>
            <person name="Gielen J."/>
            <person name="Ardiles W."/>
            <person name="Bents O."/>
            <person name="Lemcke K."/>
            <person name="Kolesov G."/>
            <person name="Mayer K.F.X."/>
            <person name="Rudd S."/>
            <person name="Schoof H."/>
            <person name="Schueller C."/>
            <person name="Zaccaria P."/>
            <person name="Mewes H.-W."/>
            <person name="Bevan M."/>
            <person name="Fransz P.F."/>
        </authorList>
    </citation>
    <scope>NUCLEOTIDE SEQUENCE [LARGE SCALE GENOMIC DNA]</scope>
    <source>
        <strain>cv. Columbia</strain>
    </source>
</reference>
<reference key="3">
    <citation type="journal article" date="2017" name="Plant J.">
        <title>Araport11: a complete reannotation of the Arabidopsis thaliana reference genome.</title>
        <authorList>
            <person name="Cheng C.Y."/>
            <person name="Krishnakumar V."/>
            <person name="Chan A.P."/>
            <person name="Thibaud-Nissen F."/>
            <person name="Schobel S."/>
            <person name="Town C.D."/>
        </authorList>
    </citation>
    <scope>GENOME REANNOTATION</scope>
    <source>
        <strain>cv. Columbia</strain>
    </source>
</reference>
<reference key="4">
    <citation type="journal article" date="2003" name="Science">
        <title>Empirical analysis of transcriptional activity in the Arabidopsis genome.</title>
        <authorList>
            <person name="Yamada K."/>
            <person name="Lim J."/>
            <person name="Dale J.M."/>
            <person name="Chen H."/>
            <person name="Shinn P."/>
            <person name="Palm C.J."/>
            <person name="Southwick A.M."/>
            <person name="Wu H.C."/>
            <person name="Kim C.J."/>
            <person name="Nguyen M."/>
            <person name="Pham P.K."/>
            <person name="Cheuk R.F."/>
            <person name="Karlin-Newmann G."/>
            <person name="Liu S.X."/>
            <person name="Lam B."/>
            <person name="Sakano H."/>
            <person name="Wu T."/>
            <person name="Yu G."/>
            <person name="Miranda M."/>
            <person name="Quach H.L."/>
            <person name="Tripp M."/>
            <person name="Chang C.H."/>
            <person name="Lee J.M."/>
            <person name="Toriumi M.J."/>
            <person name="Chan M.M."/>
            <person name="Tang C.C."/>
            <person name="Onodera C.S."/>
            <person name="Deng J.M."/>
            <person name="Akiyama K."/>
            <person name="Ansari Y."/>
            <person name="Arakawa T."/>
            <person name="Banh J."/>
            <person name="Banno F."/>
            <person name="Bowser L."/>
            <person name="Brooks S.Y."/>
            <person name="Carninci P."/>
            <person name="Chao Q."/>
            <person name="Choy N."/>
            <person name="Enju A."/>
            <person name="Goldsmith A.D."/>
            <person name="Gurjal M."/>
            <person name="Hansen N.F."/>
            <person name="Hayashizaki Y."/>
            <person name="Johnson-Hopson C."/>
            <person name="Hsuan V.W."/>
            <person name="Iida K."/>
            <person name="Karnes M."/>
            <person name="Khan S."/>
            <person name="Koesema E."/>
            <person name="Ishida J."/>
            <person name="Jiang P.X."/>
            <person name="Jones T."/>
            <person name="Kawai J."/>
            <person name="Kamiya A."/>
            <person name="Meyers C."/>
            <person name="Nakajima M."/>
            <person name="Narusaka M."/>
            <person name="Seki M."/>
            <person name="Sakurai T."/>
            <person name="Satou M."/>
            <person name="Tamse R."/>
            <person name="Vaysberg M."/>
            <person name="Wallender E.K."/>
            <person name="Wong C."/>
            <person name="Yamamura Y."/>
            <person name="Yuan S."/>
            <person name="Shinozaki K."/>
            <person name="Davis R.W."/>
            <person name="Theologis A."/>
            <person name="Ecker J.R."/>
        </authorList>
    </citation>
    <scope>NUCLEOTIDE SEQUENCE [LARGE SCALE MRNA]</scope>
    <source>
        <strain>cv. Columbia</strain>
    </source>
</reference>
<reference key="5">
    <citation type="submission" date="2006-07" db="EMBL/GenBank/DDBJ databases">
        <title>Large-scale analysis of RIKEN Arabidopsis full-length (RAFL) cDNAs.</title>
        <authorList>
            <person name="Totoki Y."/>
            <person name="Seki M."/>
            <person name="Ishida J."/>
            <person name="Nakajima M."/>
            <person name="Enju A."/>
            <person name="Kamiya A."/>
            <person name="Narusaka M."/>
            <person name="Shin-i T."/>
            <person name="Nakagawa M."/>
            <person name="Sakamoto N."/>
            <person name="Oishi K."/>
            <person name="Kohara Y."/>
            <person name="Kobayashi M."/>
            <person name="Toyoda A."/>
            <person name="Sakaki Y."/>
            <person name="Sakurai T."/>
            <person name="Iida K."/>
            <person name="Akiyama K."/>
            <person name="Satou M."/>
            <person name="Toyoda T."/>
            <person name="Konagaya A."/>
            <person name="Carninci P."/>
            <person name="Kawai J."/>
            <person name="Hayashizaki Y."/>
            <person name="Shinozaki K."/>
        </authorList>
    </citation>
    <scope>NUCLEOTIDE SEQUENCE [LARGE SCALE MRNA]</scope>
    <source>
        <strain>cv. Columbia</strain>
    </source>
</reference>
<reference key="6">
    <citation type="journal article" date="2000" name="Plant Physiol.">
        <title>The cellulose synthase superfamily.</title>
        <authorList>
            <person name="Richmond T.A."/>
            <person name="Somerville C.R."/>
        </authorList>
    </citation>
    <scope>GENE FAMILY</scope>
    <scope>NOMENCLATURE</scope>
</reference>
<reference key="7">
    <citation type="journal article" date="2003" name="Plant Physiol.">
        <title>Agrobacterium-mediated root transformation is inhibited by mutation of an Arabidopsis cellulose synthase-like gene.</title>
        <authorList>
            <person name="Zhu Y."/>
            <person name="Nam J."/>
            <person name="Carpita N.C."/>
            <person name="Matthysse A.G."/>
            <person name="Gelvin S.B."/>
        </authorList>
    </citation>
    <scope>FUNCTION</scope>
    <scope>TISSUE SPECIFICITY</scope>
    <scope>DISRUPTION PHENOTYPE</scope>
</reference>
<reference key="8">
    <citation type="journal article" date="2005" name="Proc. Natl. Acad. Sci. U.S.A.">
        <title>Expression of cellulose synthase-like (Csl) genes in insect cells reveals that CslA family members encode mannan synthases.</title>
        <authorList>
            <person name="Liepman A.H."/>
            <person name="Wilkerson C.G."/>
            <person name="Keegstra K."/>
        </authorList>
    </citation>
    <scope>FUNCTION</scope>
    <scope>CATALYTIC ACTIVITY</scope>
</reference>
<reference key="9">
    <citation type="journal article" date="2007" name="Plant Physiol.">
        <title>Functional genomic analysis supports conservation of function among cellulose synthase-like a gene family members and suggests diverse roles of mannans in plants.</title>
        <authorList>
            <person name="Liepman A.H."/>
            <person name="Nairn C.J."/>
            <person name="Willats W.G.T."/>
            <person name="Soerensen I."/>
            <person name="Roberts A.W."/>
            <person name="Keegstra K."/>
        </authorList>
    </citation>
    <scope>FUNCTION</scope>
    <scope>CATALYTIC ACTIVITY</scope>
</reference>
<organism>
    <name type="scientific">Arabidopsis thaliana</name>
    <name type="common">Mouse-ear cress</name>
    <dbReference type="NCBI Taxonomy" id="3702"/>
    <lineage>
        <taxon>Eukaryota</taxon>
        <taxon>Viridiplantae</taxon>
        <taxon>Streptophyta</taxon>
        <taxon>Embryophyta</taxon>
        <taxon>Tracheophyta</taxon>
        <taxon>Spermatophyta</taxon>
        <taxon>Magnoliopsida</taxon>
        <taxon>eudicotyledons</taxon>
        <taxon>Gunneridae</taxon>
        <taxon>Pentapetalae</taxon>
        <taxon>rosids</taxon>
        <taxon>malvids</taxon>
        <taxon>Brassicales</taxon>
        <taxon>Brassicaceae</taxon>
        <taxon>Camelineae</taxon>
        <taxon>Arabidopsis</taxon>
    </lineage>
</organism>
<comment type="function">
    <text evidence="2 3 4">Possesses glucomannan synthase and mannan synthase activities in vitro. Mannan synthase consists of a 4-beta-mannosyltransferase activity on mannan using GDP-mannose. The beta-1,4-mannan product is the backbone for galactomannan synthesis by galactomannan galactosyltransferase. Galactomannan is a noncellulosic polysaccharides of plant cell wall (PubMed:15647349, PubMed:17307900). Required for lateral root development (PubMed:14612582).</text>
</comment>
<comment type="catalytic activity">
    <reaction evidence="3 4">
        <text>GDP-mannose + (glucomannan)n = GDP + (glucomannan)n+1.</text>
        <dbReference type="EC" id="2.4.1.32"/>
    </reaction>
</comment>
<comment type="subcellular location">
    <subcellularLocation>
        <location evidence="6">Golgi apparatus membrane</location>
        <topology evidence="6">Multi-pass membrane protein</topology>
    </subcellularLocation>
</comment>
<comment type="tissue specificity">
    <text evidence="2">Expressed in cotyledons at the base of the hypocotyls, in root elongation zone, lateral root primordia, vascular system of young leaves, abscission zone of the pedicle,.</text>
</comment>
<comment type="disruption phenotype">
    <text evidence="2">Plants develop approximately half the number of lateral roots without affecting significantly aerial parts development, and are resistant to A.tumefaciens transformation.</text>
</comment>
<comment type="similarity">
    <text evidence="6">Belongs to the glycosyltransferase 2 family. Plant cellulose synthase-like A subfamily.</text>
</comment>